<comment type="function">
    <text evidence="1 2">Secreted L-amino-acid oxidase that acts as a key immunoregulator. Has preference for L-aromatic amino acids: converts phenylalanine (Phe), tyrosine (Tyr) and tryptophan (Trp) to phenylpyruvic acid (PP), hydroxyphenylpyruvic acid (HPP), and indole-3-pyruvic acid (I3P), respectively. Also has weak L-arginine oxidase activity. Acts as a negative regulator of anti-tumor immunity by mediating Trp degradation via an indole pyruvate pathway that activates the transcription factor AHR. IL4I1-mediated Trp catabolism generates I3P, giving rise to indole metabolites (indole-3-acetic acid (IAA) and indole-3-aldehyde (I3A)) and kynurenic acid, which act as ligands for AHR, a ligand-activated transcription factor that plays important roles in immunity and cancer. AHR activation by indoles following IL4I1-mediated Trp degradation enhances tumor progression by promoting cancer cell motility and suppressing adaptive immunity. Also has an immunoregulatory function in some immune cells, probably by mediating Trp degradation and promoting downstream AHR activation: inhibits T-cell activation and proliferation, promotes the differentiation of naive CD4(+) T-cells into FOXP3(+) regulatory T-cells (Treg) and regulates the development and function of B-cells (By similarity). Also regulates M2 macrophage polarization by inhibiting T-cell activation (By similarity). Also has antibacterial properties by inhibiting growth of Gram negative and Gram positive bacteria through the production of NH4(+) and H2O2 (By similarity).</text>
</comment>
<comment type="catalytic activity">
    <reaction evidence="2">
        <text>an L-alpha-amino acid + O2 + H2O = a 2-oxocarboxylate + H2O2 + NH4(+)</text>
        <dbReference type="Rhea" id="RHEA:13781"/>
        <dbReference type="ChEBI" id="CHEBI:15377"/>
        <dbReference type="ChEBI" id="CHEBI:15379"/>
        <dbReference type="ChEBI" id="CHEBI:16240"/>
        <dbReference type="ChEBI" id="CHEBI:28938"/>
        <dbReference type="ChEBI" id="CHEBI:35179"/>
        <dbReference type="ChEBI" id="CHEBI:59869"/>
        <dbReference type="EC" id="1.4.3.2"/>
    </reaction>
    <physiologicalReaction direction="left-to-right" evidence="2">
        <dbReference type="Rhea" id="RHEA:13782"/>
    </physiologicalReaction>
</comment>
<comment type="catalytic activity">
    <reaction evidence="2">
        <text>L-tryptophan + O2 + H2O = indole-3-pyruvate + H2O2 + NH4(+)</text>
        <dbReference type="Rhea" id="RHEA:61244"/>
        <dbReference type="ChEBI" id="CHEBI:15377"/>
        <dbReference type="ChEBI" id="CHEBI:15379"/>
        <dbReference type="ChEBI" id="CHEBI:16240"/>
        <dbReference type="ChEBI" id="CHEBI:17640"/>
        <dbReference type="ChEBI" id="CHEBI:28938"/>
        <dbReference type="ChEBI" id="CHEBI:57912"/>
    </reaction>
    <physiologicalReaction direction="left-to-right" evidence="2">
        <dbReference type="Rhea" id="RHEA:61245"/>
    </physiologicalReaction>
</comment>
<comment type="catalytic activity">
    <reaction evidence="2">
        <text>L-phenylalanine + O2 + H2O = 3-phenylpyruvate + H2O2 + NH4(+)</text>
        <dbReference type="Rhea" id="RHEA:61240"/>
        <dbReference type="ChEBI" id="CHEBI:15377"/>
        <dbReference type="ChEBI" id="CHEBI:15379"/>
        <dbReference type="ChEBI" id="CHEBI:16240"/>
        <dbReference type="ChEBI" id="CHEBI:18005"/>
        <dbReference type="ChEBI" id="CHEBI:28938"/>
        <dbReference type="ChEBI" id="CHEBI:58095"/>
    </reaction>
    <physiologicalReaction direction="left-to-right" evidence="2">
        <dbReference type="Rhea" id="RHEA:61241"/>
    </physiologicalReaction>
</comment>
<comment type="catalytic activity">
    <reaction evidence="2">
        <text>L-tyrosine + O2 + H2O = 3-(4-hydroxyphenyl)pyruvate + H2O2 + NH4(+)</text>
        <dbReference type="Rhea" id="RHEA:61248"/>
        <dbReference type="ChEBI" id="CHEBI:15377"/>
        <dbReference type="ChEBI" id="CHEBI:15379"/>
        <dbReference type="ChEBI" id="CHEBI:16240"/>
        <dbReference type="ChEBI" id="CHEBI:28938"/>
        <dbReference type="ChEBI" id="CHEBI:36242"/>
        <dbReference type="ChEBI" id="CHEBI:58315"/>
    </reaction>
    <physiologicalReaction direction="left-to-right" evidence="2">
        <dbReference type="Rhea" id="RHEA:61249"/>
    </physiologicalReaction>
</comment>
<comment type="catalytic activity">
    <reaction evidence="2">
        <text>L-arginine + O2 + H2O = 5-guanidino-2-oxopentanoate + H2O2 + NH4(+)</text>
        <dbReference type="Rhea" id="RHEA:51404"/>
        <dbReference type="ChEBI" id="CHEBI:15377"/>
        <dbReference type="ChEBI" id="CHEBI:15379"/>
        <dbReference type="ChEBI" id="CHEBI:16240"/>
        <dbReference type="ChEBI" id="CHEBI:28938"/>
        <dbReference type="ChEBI" id="CHEBI:32682"/>
        <dbReference type="ChEBI" id="CHEBI:58489"/>
        <dbReference type="EC" id="1.4.3.25"/>
    </reaction>
    <physiologicalReaction direction="left-to-right" evidence="2">
        <dbReference type="Rhea" id="RHEA:51405"/>
    </physiologicalReaction>
</comment>
<comment type="cofactor">
    <cofactor evidence="1">
        <name>FAD</name>
        <dbReference type="ChEBI" id="CHEBI:57692"/>
    </cofactor>
</comment>
<comment type="pathway">
    <text evidence="2">Amino-acid degradation; L-tryptophan degradation via pyruvate pathway.</text>
</comment>
<comment type="subcellular location">
    <subcellularLocation>
        <location evidence="2">Secreted</location>
    </subcellularLocation>
    <subcellularLocation>
        <location evidence="1">Lysosome</location>
    </subcellularLocation>
    <subcellularLocation>
        <location evidence="2">Cytoplasmic vesicle</location>
        <location evidence="2">Secretory vesicle</location>
        <location evidence="2">Acrosome</location>
    </subcellularLocation>
    <text evidence="2">Secreted at the immunological synapse.</text>
</comment>
<comment type="induction">
    <text evidence="4">By interleukin-4.</text>
</comment>
<comment type="similarity">
    <text evidence="6">Belongs to the flavin monoamine oxidase family. FIG1 subfamily.</text>
</comment>
<name>OXLA_MUSSP</name>
<keyword id="KW-1064">Adaptive immunity</keyword>
<keyword id="KW-0968">Cytoplasmic vesicle</keyword>
<keyword id="KW-0274">FAD</keyword>
<keyword id="KW-0285">Flavoprotein</keyword>
<keyword id="KW-0325">Glycoprotein</keyword>
<keyword id="KW-0391">Immunity</keyword>
<keyword id="KW-0458">Lysosome</keyword>
<keyword id="KW-0560">Oxidoreductase</keyword>
<keyword id="KW-0964">Secreted</keyword>
<sequence length="46" mass="5165">AFKDLKALGCKKAMNKFNKHTLLEYLLEEGNLSRPAVQLLGDVMSE</sequence>
<feature type="chain" id="PRO_0000099873" description="L-amino-acid oxidase">
    <location>
        <begin position="1" status="less than"/>
        <end position="46" status="greater than"/>
    </location>
</feature>
<feature type="glycosylation site" description="N-linked (GlcNAc...) asparagine" evidence="3">
    <location>
        <position position="31"/>
    </location>
</feature>
<feature type="non-terminal residue">
    <location>
        <position position="1"/>
    </location>
</feature>
<feature type="non-terminal residue">
    <location>
        <position position="46"/>
    </location>
</feature>
<evidence type="ECO:0000250" key="1">
    <source>
        <dbReference type="UniProtKB" id="O09046"/>
    </source>
</evidence>
<evidence type="ECO:0000250" key="2">
    <source>
        <dbReference type="UniProtKB" id="Q96RQ9"/>
    </source>
</evidence>
<evidence type="ECO:0000255" key="3"/>
<evidence type="ECO:0000269" key="4">
    <source>
    </source>
</evidence>
<evidence type="ECO:0000303" key="5">
    <source>
    </source>
</evidence>
<evidence type="ECO:0000305" key="6"/>
<dbReference type="EC" id="1.4.3.2" evidence="2"/>
<dbReference type="EC" id="1.4.3.25" evidence="2"/>
<dbReference type="EMBL" id="U80211">
    <property type="protein sequence ID" value="AAB51360.1"/>
    <property type="molecule type" value="Genomic_DNA"/>
</dbReference>
<dbReference type="SMR" id="O08615"/>
<dbReference type="GlyCosmos" id="O08615">
    <property type="glycosylation" value="1 site, No reported glycans"/>
</dbReference>
<dbReference type="MGI" id="MGI:109552">
    <property type="gene designation" value="Il4i1"/>
</dbReference>
<dbReference type="UniPathway" id="UPA00332"/>
<dbReference type="GO" id="GO:0001669">
    <property type="term" value="C:acrosomal vesicle"/>
    <property type="evidence" value="ECO:0000250"/>
    <property type="project" value="UniProtKB"/>
</dbReference>
<dbReference type="GO" id="GO:0005576">
    <property type="term" value="C:extracellular region"/>
    <property type="evidence" value="ECO:0000250"/>
    <property type="project" value="UniProtKB"/>
</dbReference>
<dbReference type="GO" id="GO:0001772">
    <property type="term" value="C:immunological synapse"/>
    <property type="evidence" value="ECO:0000250"/>
    <property type="project" value="UniProtKB"/>
</dbReference>
<dbReference type="GO" id="GO:0005764">
    <property type="term" value="C:lysosome"/>
    <property type="evidence" value="ECO:0007669"/>
    <property type="project" value="UniProtKB-SubCell"/>
</dbReference>
<dbReference type="GO" id="GO:0097225">
    <property type="term" value="C:sperm midpiece"/>
    <property type="evidence" value="ECO:0000250"/>
    <property type="project" value="UniProtKB"/>
</dbReference>
<dbReference type="GO" id="GO:0001716">
    <property type="term" value="F:L-amino-acid oxidase activity"/>
    <property type="evidence" value="ECO:0000250"/>
    <property type="project" value="UniProtKB"/>
</dbReference>
<dbReference type="GO" id="GO:0106329">
    <property type="term" value="F:L-phenylalaine oxidase activity"/>
    <property type="evidence" value="ECO:0007669"/>
    <property type="project" value="RHEA"/>
</dbReference>
<dbReference type="GO" id="GO:0002250">
    <property type="term" value="P:adaptive immune response"/>
    <property type="evidence" value="ECO:0007669"/>
    <property type="project" value="UniProtKB-KW"/>
</dbReference>
<dbReference type="GO" id="GO:0006559">
    <property type="term" value="P:L-phenylalanine catabolic process"/>
    <property type="evidence" value="ECO:0000250"/>
    <property type="project" value="UniProtKB"/>
</dbReference>
<dbReference type="GO" id="GO:0006569">
    <property type="term" value="P:L-tryptophan catabolic process"/>
    <property type="evidence" value="ECO:0000250"/>
    <property type="project" value="UniProtKB"/>
</dbReference>
<dbReference type="GO" id="GO:0019440">
    <property type="term" value="P:L-tryptophan catabolic process to indole-3-acetate"/>
    <property type="evidence" value="ECO:0000250"/>
    <property type="project" value="UniProtKB"/>
</dbReference>
<dbReference type="GO" id="GO:0050868">
    <property type="term" value="P:negative regulation of T cell activation"/>
    <property type="evidence" value="ECO:0000250"/>
    <property type="project" value="UniProtKB"/>
</dbReference>
<dbReference type="GO" id="GO:0002841">
    <property type="term" value="P:negative regulation of T cell mediated immune response to tumor cell"/>
    <property type="evidence" value="ECO:0000250"/>
    <property type="project" value="UniProtKB"/>
</dbReference>
<dbReference type="GO" id="GO:0042130">
    <property type="term" value="P:negative regulation of T cell proliferation"/>
    <property type="evidence" value="ECO:0000250"/>
    <property type="project" value="UniProtKB"/>
</dbReference>
<dbReference type="GO" id="GO:0045591">
    <property type="term" value="P:positive regulation of regulatory T cell differentiation"/>
    <property type="evidence" value="ECO:0000250"/>
    <property type="project" value="UniProtKB"/>
</dbReference>
<dbReference type="GO" id="GO:0045944">
    <property type="term" value="P:positive regulation of transcription by RNA polymerase II"/>
    <property type="evidence" value="ECO:0000250"/>
    <property type="project" value="UniProtKB"/>
</dbReference>
<dbReference type="GO" id="GO:0002819">
    <property type="term" value="P:regulation of adaptive immune response"/>
    <property type="evidence" value="ECO:0000250"/>
    <property type="project" value="UniProtKB"/>
</dbReference>
<dbReference type="GO" id="GO:0045577">
    <property type="term" value="P:regulation of B cell differentiation"/>
    <property type="evidence" value="ECO:0000250"/>
    <property type="project" value="UniProtKB"/>
</dbReference>
<dbReference type="GO" id="GO:0006572">
    <property type="term" value="P:tyrosine catabolic process"/>
    <property type="evidence" value="ECO:0000250"/>
    <property type="project" value="UniProtKB"/>
</dbReference>
<dbReference type="FunFam" id="1.10.405.10:FF:000040">
    <property type="entry name" value="L-amino-acid oxidase"/>
    <property type="match status" value="1"/>
</dbReference>
<dbReference type="Gene3D" id="1.10.405.10">
    <property type="entry name" value="Guanine Nucleotide Dissociation Inhibitor, domain 1"/>
    <property type="match status" value="1"/>
</dbReference>
<gene>
    <name evidence="1" type="primary">Il4i1</name>
    <name evidence="5" type="synonym">Fig1</name>
</gene>
<reference key="1">
    <citation type="journal article" date="1997" name="Proc. Natl. Acad. Sci. U.S.A.">
        <title>Fig1, an interleukin 4-induced mouse B cell gene isolated by cDNA representational difference analysis.</title>
        <authorList>
            <person name="Chu C.C."/>
            <person name="Paul W.E."/>
        </authorList>
    </citation>
    <scope>NUCLEOTIDE SEQUENCE [GENOMIC DNA]</scope>
    <scope>INDUCTION</scope>
</reference>
<organism>
    <name type="scientific">Mus spretus</name>
    <name type="common">Western Mediterranean mouse</name>
    <name type="synonym">Algerian mouse</name>
    <dbReference type="NCBI Taxonomy" id="10096"/>
    <lineage>
        <taxon>Eukaryota</taxon>
        <taxon>Metazoa</taxon>
        <taxon>Chordata</taxon>
        <taxon>Craniata</taxon>
        <taxon>Vertebrata</taxon>
        <taxon>Euteleostomi</taxon>
        <taxon>Mammalia</taxon>
        <taxon>Eutheria</taxon>
        <taxon>Euarchontoglires</taxon>
        <taxon>Glires</taxon>
        <taxon>Rodentia</taxon>
        <taxon>Myomorpha</taxon>
        <taxon>Muroidea</taxon>
        <taxon>Muridae</taxon>
        <taxon>Murinae</taxon>
        <taxon>Mus</taxon>
        <taxon>Mus</taxon>
    </lineage>
</organism>
<proteinExistence type="evidence at transcript level"/>
<accession>O08615</accession>
<protein>
    <recommendedName>
        <fullName evidence="6">L-amino-acid oxidase</fullName>
        <shortName evidence="6">LAAO</shortName>
        <shortName evidence="6">LAO</shortName>
        <ecNumber evidence="2">1.4.3.2</ecNumber>
        <ecNumber evidence="2">1.4.3.25</ecNumber>
    </recommendedName>
    <alternativeName>
        <fullName evidence="1">Interleukin-4-induced protein 1</fullName>
        <shortName evidence="1">IL4-induced protein 1</shortName>
    </alternativeName>
    <alternativeName>
        <fullName evidence="5">Protein Fig-1</fullName>
    </alternativeName>
</protein>